<protein>
    <recommendedName>
        <fullName evidence="1">Mitochondrial ribonuclease P catalytic subunit</fullName>
        <ecNumber evidence="1">3.1.26.5</ecNumber>
    </recommendedName>
    <alternativeName>
        <fullName evidence="1">Mitochondrial ribonuclease P protein 3</fullName>
        <shortName evidence="1">Mitochondrial RNase P protein 3</shortName>
    </alternativeName>
</protein>
<reference key="1">
    <citation type="journal article" date="2005" name="Science">
        <title>The transcriptional landscape of the mammalian genome.</title>
        <authorList>
            <person name="Carninci P."/>
            <person name="Kasukawa T."/>
            <person name="Katayama S."/>
            <person name="Gough J."/>
            <person name="Frith M.C."/>
            <person name="Maeda N."/>
            <person name="Oyama R."/>
            <person name="Ravasi T."/>
            <person name="Lenhard B."/>
            <person name="Wells C."/>
            <person name="Kodzius R."/>
            <person name="Shimokawa K."/>
            <person name="Bajic V.B."/>
            <person name="Brenner S.E."/>
            <person name="Batalov S."/>
            <person name="Forrest A.R."/>
            <person name="Zavolan M."/>
            <person name="Davis M.J."/>
            <person name="Wilming L.G."/>
            <person name="Aidinis V."/>
            <person name="Allen J.E."/>
            <person name="Ambesi-Impiombato A."/>
            <person name="Apweiler R."/>
            <person name="Aturaliya R.N."/>
            <person name="Bailey T.L."/>
            <person name="Bansal M."/>
            <person name="Baxter L."/>
            <person name="Beisel K.W."/>
            <person name="Bersano T."/>
            <person name="Bono H."/>
            <person name="Chalk A.M."/>
            <person name="Chiu K.P."/>
            <person name="Choudhary V."/>
            <person name="Christoffels A."/>
            <person name="Clutterbuck D.R."/>
            <person name="Crowe M.L."/>
            <person name="Dalla E."/>
            <person name="Dalrymple B.P."/>
            <person name="de Bono B."/>
            <person name="Della Gatta G."/>
            <person name="di Bernardo D."/>
            <person name="Down T."/>
            <person name="Engstrom P."/>
            <person name="Fagiolini M."/>
            <person name="Faulkner G."/>
            <person name="Fletcher C.F."/>
            <person name="Fukushima T."/>
            <person name="Furuno M."/>
            <person name="Futaki S."/>
            <person name="Gariboldi M."/>
            <person name="Georgii-Hemming P."/>
            <person name="Gingeras T.R."/>
            <person name="Gojobori T."/>
            <person name="Green R.E."/>
            <person name="Gustincich S."/>
            <person name="Harbers M."/>
            <person name="Hayashi Y."/>
            <person name="Hensch T.K."/>
            <person name="Hirokawa N."/>
            <person name="Hill D."/>
            <person name="Huminiecki L."/>
            <person name="Iacono M."/>
            <person name="Ikeo K."/>
            <person name="Iwama A."/>
            <person name="Ishikawa T."/>
            <person name="Jakt M."/>
            <person name="Kanapin A."/>
            <person name="Katoh M."/>
            <person name="Kawasawa Y."/>
            <person name="Kelso J."/>
            <person name="Kitamura H."/>
            <person name="Kitano H."/>
            <person name="Kollias G."/>
            <person name="Krishnan S.P."/>
            <person name="Kruger A."/>
            <person name="Kummerfeld S.K."/>
            <person name="Kurochkin I.V."/>
            <person name="Lareau L.F."/>
            <person name="Lazarevic D."/>
            <person name="Lipovich L."/>
            <person name="Liu J."/>
            <person name="Liuni S."/>
            <person name="McWilliam S."/>
            <person name="Madan Babu M."/>
            <person name="Madera M."/>
            <person name="Marchionni L."/>
            <person name="Matsuda H."/>
            <person name="Matsuzawa S."/>
            <person name="Miki H."/>
            <person name="Mignone F."/>
            <person name="Miyake S."/>
            <person name="Morris K."/>
            <person name="Mottagui-Tabar S."/>
            <person name="Mulder N."/>
            <person name="Nakano N."/>
            <person name="Nakauchi H."/>
            <person name="Ng P."/>
            <person name="Nilsson R."/>
            <person name="Nishiguchi S."/>
            <person name="Nishikawa S."/>
            <person name="Nori F."/>
            <person name="Ohara O."/>
            <person name="Okazaki Y."/>
            <person name="Orlando V."/>
            <person name="Pang K.C."/>
            <person name="Pavan W.J."/>
            <person name="Pavesi G."/>
            <person name="Pesole G."/>
            <person name="Petrovsky N."/>
            <person name="Piazza S."/>
            <person name="Reed J."/>
            <person name="Reid J.F."/>
            <person name="Ring B.Z."/>
            <person name="Ringwald M."/>
            <person name="Rost B."/>
            <person name="Ruan Y."/>
            <person name="Salzberg S.L."/>
            <person name="Sandelin A."/>
            <person name="Schneider C."/>
            <person name="Schoenbach C."/>
            <person name="Sekiguchi K."/>
            <person name="Semple C.A."/>
            <person name="Seno S."/>
            <person name="Sessa L."/>
            <person name="Sheng Y."/>
            <person name="Shibata Y."/>
            <person name="Shimada H."/>
            <person name="Shimada K."/>
            <person name="Silva D."/>
            <person name="Sinclair B."/>
            <person name="Sperling S."/>
            <person name="Stupka E."/>
            <person name="Sugiura K."/>
            <person name="Sultana R."/>
            <person name="Takenaka Y."/>
            <person name="Taki K."/>
            <person name="Tammoja K."/>
            <person name="Tan S.L."/>
            <person name="Tang S."/>
            <person name="Taylor M.S."/>
            <person name="Tegner J."/>
            <person name="Teichmann S.A."/>
            <person name="Ueda H.R."/>
            <person name="van Nimwegen E."/>
            <person name="Verardo R."/>
            <person name="Wei C.L."/>
            <person name="Yagi K."/>
            <person name="Yamanishi H."/>
            <person name="Zabarovsky E."/>
            <person name="Zhu S."/>
            <person name="Zimmer A."/>
            <person name="Hide W."/>
            <person name="Bult C."/>
            <person name="Grimmond S.M."/>
            <person name="Teasdale R.D."/>
            <person name="Liu E.T."/>
            <person name="Brusic V."/>
            <person name="Quackenbush J."/>
            <person name="Wahlestedt C."/>
            <person name="Mattick J.S."/>
            <person name="Hume D.A."/>
            <person name="Kai C."/>
            <person name="Sasaki D."/>
            <person name="Tomaru Y."/>
            <person name="Fukuda S."/>
            <person name="Kanamori-Katayama M."/>
            <person name="Suzuki M."/>
            <person name="Aoki J."/>
            <person name="Arakawa T."/>
            <person name="Iida J."/>
            <person name="Imamura K."/>
            <person name="Itoh M."/>
            <person name="Kato T."/>
            <person name="Kawaji H."/>
            <person name="Kawagashira N."/>
            <person name="Kawashima T."/>
            <person name="Kojima M."/>
            <person name="Kondo S."/>
            <person name="Konno H."/>
            <person name="Nakano K."/>
            <person name="Ninomiya N."/>
            <person name="Nishio T."/>
            <person name="Okada M."/>
            <person name="Plessy C."/>
            <person name="Shibata K."/>
            <person name="Shiraki T."/>
            <person name="Suzuki S."/>
            <person name="Tagami M."/>
            <person name="Waki K."/>
            <person name="Watahiki A."/>
            <person name="Okamura-Oho Y."/>
            <person name="Suzuki H."/>
            <person name="Kawai J."/>
            <person name="Hayashizaki Y."/>
        </authorList>
    </citation>
    <scope>NUCLEOTIDE SEQUENCE [LARGE SCALE MRNA]</scope>
    <source>
        <strain>C57BL/6J</strain>
        <tissue>Bone marrow</tissue>
        <tissue>Embryo</tissue>
        <tissue>Forelimb</tissue>
        <tissue>Stomach</tissue>
    </source>
</reference>
<reference key="2">
    <citation type="submission" date="2005-09" db="EMBL/GenBank/DDBJ databases">
        <authorList>
            <person name="Mural R.J."/>
            <person name="Adams M.D."/>
            <person name="Myers E.W."/>
            <person name="Smith H.O."/>
            <person name="Venter J.C."/>
        </authorList>
    </citation>
    <scope>NUCLEOTIDE SEQUENCE [LARGE SCALE GENOMIC DNA]</scope>
</reference>
<reference key="3">
    <citation type="journal article" date="2004" name="Genome Res.">
        <title>The status, quality, and expansion of the NIH full-length cDNA project: the Mammalian Gene Collection (MGC).</title>
        <authorList>
            <consortium name="The MGC Project Team"/>
        </authorList>
    </citation>
    <scope>NUCLEOTIDE SEQUENCE [LARGE SCALE MRNA]</scope>
    <source>
        <tissue>Mammary gland</tissue>
    </source>
</reference>
<reference key="4">
    <citation type="journal article" date="2004" name="DNA Res.">
        <title>Prediction of the coding sequences of mouse homologues of KIAA gene: IV. The complete nucleotide sequences of 500 mouse KIAA-homologous cDNAs identified by screening of terminal sequences of cDNA clones randomly sampled from size-fractionated libraries.</title>
        <authorList>
            <person name="Okazaki N."/>
            <person name="Kikuno R."/>
            <person name="Ohara R."/>
            <person name="Inamoto S."/>
            <person name="Koseki H."/>
            <person name="Hiraoka S."/>
            <person name="Saga Y."/>
            <person name="Seino S."/>
            <person name="Nishimura M."/>
            <person name="Kaisho T."/>
            <person name="Hoshino K."/>
            <person name="Kitamura H."/>
            <person name="Nagase T."/>
            <person name="Ohara O."/>
            <person name="Koga H."/>
        </authorList>
    </citation>
    <scope>NUCLEOTIDE SEQUENCE [LARGE SCALE MRNA] OF 327-584</scope>
    <source>
        <tissue>Splenocyte</tissue>
    </source>
</reference>
<reference key="5">
    <citation type="journal article" date="2021" name="Am. J. Hum. Genet.">
        <title>Bi-allelic variants in the mitochondrial RNase P subunit PRORP cause mitochondrial tRNA processing defects and pleiotropic multisystem presentations.</title>
        <authorList>
            <consortium name="Genomics England Research Consortium"/>
            <person name="Hochberg I."/>
            <person name="Demain L.A.M."/>
            <person name="Richer J."/>
            <person name="Thompson K."/>
            <person name="Urquhart J.E."/>
            <person name="Rea A."/>
            <person name="Pagarkar W."/>
            <person name="Rodriguez-Palmero A."/>
            <person name="Schlueter A."/>
            <person name="Verdura E."/>
            <person name="Pujol A."/>
            <person name="Quijada-Fraile P."/>
            <person name="Amberger A."/>
            <person name="Deutschmann A.J."/>
            <person name="Demetz S."/>
            <person name="Gillespie M."/>
            <person name="Belyantseva I.A."/>
            <person name="McMillan H.J."/>
            <person name="Barzik M."/>
            <person name="Beaman G.M."/>
            <person name="Motha R."/>
            <person name="Ng K.Y."/>
            <person name="O'Sullivan J."/>
            <person name="Williams S.G."/>
            <person name="Bhaskar S.S."/>
            <person name="Lawrence I.R."/>
            <person name="Jenkinson E.M."/>
            <person name="Zambonin J.L."/>
            <person name="Blumenfeld Z."/>
            <person name="Yalonetsky S."/>
            <person name="Oerum S."/>
            <person name="Rossmanith W."/>
            <person name="Yue W.W."/>
            <person name="Zschocke J."/>
            <person name="Munro K.J."/>
            <person name="Battersby B.J."/>
            <person name="Friedman T.B."/>
            <person name="Taylor R.W."/>
            <person name="O'Keefe R.T."/>
            <person name="Newman W.G."/>
        </authorList>
    </citation>
    <scope>TISSUE SPECIFICITY</scope>
</reference>
<sequence>MTFYLSGFRSIPKLWKSNPYFELGPATSSTPFFLCAIGNQQRWFSVKPTTPPNSKALNLLDTKARTHRKGNDNNGQVSSDPHYFAAGAAKKRSHIGANPQNQGHALPVRSSVQLPTKPLNSAEWDKLKEDFKGKASFEDFIISQMARNCCSVDVAKSLLAWVAAKNNGIVGYNLLVKYLYLCVFHKQTSEVIDVYEIMKAKYKSLESGGYTLLIRGLIHSDRWRESLLLLEDIKKVMVPSKKNYGDCIQGALLHQDVNTAWNLYQELIGHNLIPPLETLKAFFDYGKDINDDHYSDKLLDILLYLRNNQLYPGESFAHSIKTWFESIPGRQWKGQFTTIQKSGQCSGCGRTIEPIHLSPEEYEFLKEKIMRDVIDGGDQYKKTTPQELKRFESFVNSCPPFDIVIDGLNVAKMFPKGRESQNLLGVVSQLAQQNLQLLVLGRKHMLRPSSQWRKEEMEQVRKQAHCFFADNISEDDPFLLYATLNSGNHCKFITKDLLRDHKACLPDARTQRLFFKWQQGHQLAIMKGFQKSKLTFQHILSYDTVVQRTGDSWHIPYDEDLVQRSSCEVPTKWLCLQRKTPDPC</sequence>
<comment type="function">
    <text evidence="1">Catalytic ribonuclease component of mitochondrial ribonuclease P, a complex composed of TRMT10C/MRPP1, HSD17B10/MRPP2 and PRORP, which cleaves tRNA molecules in their 5'-ends. The presence of TRMT10C/MRPP1, HSD17B10/MRPP2 is required to catalyze tRNA molecules in their 5'-ends.</text>
</comment>
<comment type="catalytic activity">
    <reaction evidence="1">
        <text>Endonucleolytic cleavage of RNA, removing 5'-extranucleotides from tRNA precursor.</text>
        <dbReference type="EC" id="3.1.26.5"/>
    </reaction>
</comment>
<comment type="cofactor">
    <cofactor evidence="1">
        <name>Mg(2+)</name>
        <dbReference type="ChEBI" id="CHEBI:18420"/>
    </cofactor>
    <cofactor evidence="1">
        <name>Mn(2+)</name>
        <dbReference type="ChEBI" id="CHEBI:29035"/>
    </cofactor>
    <text evidence="1">Binds 2 Mg(2+) or Mg(2+) ions per subunit.</text>
</comment>
<comment type="subunit">
    <text evidence="1">Catalytic component of mitochondrial ribonuclease P, a complex composed of TRMT10C/MRPP1, HSD17B10/MRPP2 and PRORP/MRPP3.</text>
</comment>
<comment type="subcellular location">
    <subcellularLocation>
        <location evidence="1">Mitochondrion</location>
    </subcellularLocation>
</comment>
<comment type="tissue specificity">
    <text evidence="3">Detected, after the onset of hearing, in the organ of Corti around the afferent and efferent synapses of the inner hair cells and the efferent synapses of the outer hair cells.</text>
</comment>
<comment type="domain">
    <text evidence="1">Displays a distorted and non-productive active site that probably switches to a fully productive state only upon association with TRMT10C/MRPP1, HSD17B10/MRPP2 and pre-tRNA substrate.</text>
</comment>
<comment type="PTM">
    <text evidence="1">Degraded by LONP1 following mitochondrial unfolded protein response, probably leading to inhibit translation in mitochondrion.</text>
</comment>
<comment type="similarity">
    <text evidence="4">Belongs to the PPR family. P subfamily.</text>
</comment>
<comment type="sequence caution" evidence="4">
    <conflict type="erroneous initiation">
        <sequence resource="EMBL-CDS" id="BAB25874"/>
    </conflict>
    <text>Truncated N-terminus.</text>
</comment>
<comment type="sequence caution" evidence="4">
    <conflict type="miscellaneous discrepancy">
        <sequence resource="EMBL-CDS" id="BAD32220"/>
    </conflict>
    <text>Partial sequence.</text>
</comment>
<accession>Q8JZY4</accession>
<accession>Q6A076</accession>
<accession>Q8BSN8</accession>
<accession>Q9CTH1</accession>
<accession>Q9D7W9</accession>
<feature type="transit peptide" description="Mitochondrion" evidence="2">
    <location>
        <begin position="1"/>
        <end position="43"/>
    </location>
</feature>
<feature type="chain" id="PRO_0000360397" description="Mitochondrial ribonuclease P catalytic subunit">
    <location>
        <begin position="44"/>
        <end position="584"/>
    </location>
</feature>
<feature type="domain" description="PRORP">
    <location>
        <begin position="339"/>
        <end position="575"/>
    </location>
</feature>
<feature type="binding site" evidence="1">
    <location>
        <position position="345"/>
    </location>
    <ligand>
        <name>Zn(2+)</name>
        <dbReference type="ChEBI" id="CHEBI:29105"/>
    </ligand>
</feature>
<feature type="binding site" evidence="1">
    <location>
        <position position="348"/>
    </location>
    <ligand>
        <name>Zn(2+)</name>
        <dbReference type="ChEBI" id="CHEBI:29105"/>
    </ligand>
</feature>
<feature type="binding site" evidence="1">
    <location>
        <position position="406"/>
    </location>
    <ligand>
        <name>Mg(2+)</name>
        <dbReference type="ChEBI" id="CHEBI:18420"/>
        <label>1</label>
        <note>catalytic</note>
    </ligand>
</feature>
<feature type="binding site" evidence="1">
    <location>
        <position position="475"/>
    </location>
    <ligand>
        <name>Mg(2+)</name>
        <dbReference type="ChEBI" id="CHEBI:18420"/>
        <label>1</label>
        <note>catalytic</note>
    </ligand>
</feature>
<feature type="binding site" evidence="1">
    <location>
        <position position="476"/>
    </location>
    <ligand>
        <name>Mg(2+)</name>
        <dbReference type="ChEBI" id="CHEBI:18420"/>
        <label>2</label>
        <note>catalytic</note>
    </ligand>
</feature>
<feature type="binding site" evidence="1">
    <location>
        <position position="496"/>
    </location>
    <ligand>
        <name>Mg(2+)</name>
        <dbReference type="ChEBI" id="CHEBI:18420"/>
        <label>2</label>
        <note>catalytic</note>
    </ligand>
</feature>
<feature type="binding site" evidence="1">
    <location>
        <position position="554"/>
    </location>
    <ligand>
        <name>Zn(2+)</name>
        <dbReference type="ChEBI" id="CHEBI:29105"/>
    </ligand>
</feature>
<feature type="binding site" evidence="1">
    <location>
        <position position="575"/>
    </location>
    <ligand>
        <name>Zn(2+)</name>
        <dbReference type="ChEBI" id="CHEBI:29105"/>
    </ligand>
</feature>
<feature type="sequence conflict" description="In Ref. 1; BAC27278." evidence="4" ref="1">
    <original>L</original>
    <variation>V</variation>
    <location>
        <position position="430"/>
    </location>
</feature>
<keyword id="KW-0378">Hydrolase</keyword>
<keyword id="KW-0460">Magnesium</keyword>
<keyword id="KW-0464">Manganese</keyword>
<keyword id="KW-0479">Metal-binding</keyword>
<keyword id="KW-0496">Mitochondrion</keyword>
<keyword id="KW-0540">Nuclease</keyword>
<keyword id="KW-1185">Reference proteome</keyword>
<keyword id="KW-0809">Transit peptide</keyword>
<keyword id="KW-0819">tRNA processing</keyword>
<keyword id="KW-0862">Zinc</keyword>
<name>MRPP3_MOUSE</name>
<organism>
    <name type="scientific">Mus musculus</name>
    <name type="common">Mouse</name>
    <dbReference type="NCBI Taxonomy" id="10090"/>
    <lineage>
        <taxon>Eukaryota</taxon>
        <taxon>Metazoa</taxon>
        <taxon>Chordata</taxon>
        <taxon>Craniata</taxon>
        <taxon>Vertebrata</taxon>
        <taxon>Euteleostomi</taxon>
        <taxon>Mammalia</taxon>
        <taxon>Eutheria</taxon>
        <taxon>Euarchontoglires</taxon>
        <taxon>Glires</taxon>
        <taxon>Rodentia</taxon>
        <taxon>Myomorpha</taxon>
        <taxon>Muroidea</taxon>
        <taxon>Muridae</taxon>
        <taxon>Murinae</taxon>
        <taxon>Mus</taxon>
        <taxon>Mus</taxon>
    </lineage>
</organism>
<gene>
    <name type="primary">Prorp</name>
    <name type="synonym">Kiaa0391</name>
    <name evidence="1" type="synonym">Mrpp3</name>
</gene>
<evidence type="ECO:0000250" key="1">
    <source>
        <dbReference type="UniProtKB" id="O15091"/>
    </source>
</evidence>
<evidence type="ECO:0000255" key="2"/>
<evidence type="ECO:0000269" key="3">
    <source>
    </source>
</evidence>
<evidence type="ECO:0000305" key="4"/>
<dbReference type="EC" id="3.1.26.5" evidence="1"/>
<dbReference type="EMBL" id="AK003589">
    <property type="protein sequence ID" value="BAB22879.1"/>
    <property type="molecule type" value="mRNA"/>
</dbReference>
<dbReference type="EMBL" id="AK008749">
    <property type="protein sequence ID" value="BAB25874.1"/>
    <property type="status" value="ALT_INIT"/>
    <property type="molecule type" value="mRNA"/>
</dbReference>
<dbReference type="EMBL" id="AK031144">
    <property type="protein sequence ID" value="BAC27278.1"/>
    <property type="molecule type" value="mRNA"/>
</dbReference>
<dbReference type="EMBL" id="AK151976">
    <property type="protein sequence ID" value="BAE30844.1"/>
    <property type="molecule type" value="mRNA"/>
</dbReference>
<dbReference type="EMBL" id="AK152028">
    <property type="protein sequence ID" value="BAE30887.1"/>
    <property type="molecule type" value="mRNA"/>
</dbReference>
<dbReference type="EMBL" id="CH466526">
    <property type="protein sequence ID" value="EDL36732.1"/>
    <property type="molecule type" value="Genomic_DNA"/>
</dbReference>
<dbReference type="EMBL" id="BC034876">
    <property type="protein sequence ID" value="AAH34876.1"/>
    <property type="molecule type" value="mRNA"/>
</dbReference>
<dbReference type="EMBL" id="AK172942">
    <property type="protein sequence ID" value="BAD32220.1"/>
    <property type="status" value="ALT_SEQ"/>
    <property type="molecule type" value="mRNA"/>
</dbReference>
<dbReference type="CCDS" id="CCDS49068.1"/>
<dbReference type="RefSeq" id="NP_079649.1">
    <property type="nucleotide sequence ID" value="NM_025373.1"/>
</dbReference>
<dbReference type="SMR" id="Q8JZY4"/>
<dbReference type="BioGRID" id="211239">
    <property type="interactions" value="8"/>
</dbReference>
<dbReference type="FunCoup" id="Q8JZY4">
    <property type="interactions" value="3315"/>
</dbReference>
<dbReference type="STRING" id="10090.ENSMUSP00000021411"/>
<dbReference type="PhosphoSitePlus" id="Q8JZY4"/>
<dbReference type="PaxDb" id="10090-ENSMUSP00000021411"/>
<dbReference type="PeptideAtlas" id="Q8JZY4"/>
<dbReference type="ProteomicsDB" id="291415"/>
<dbReference type="Pumba" id="Q8JZY4"/>
<dbReference type="Ensembl" id="ENSMUST00000021411.15">
    <property type="protein sequence ID" value="ENSMUSP00000021411.8"/>
    <property type="gene ID" value="ENSMUSG00000021023.15"/>
</dbReference>
<dbReference type="Ensembl" id="ENSMUST00000184766.8">
    <property type="protein sequence ID" value="ENSMUSP00000139204.2"/>
    <property type="gene ID" value="ENSMUSG00000021023.15"/>
</dbReference>
<dbReference type="GeneID" id="66132"/>
<dbReference type="KEGG" id="mmu:66132"/>
<dbReference type="UCSC" id="uc007noo.2">
    <property type="organism name" value="mouse"/>
</dbReference>
<dbReference type="AGR" id="MGI:1913382"/>
<dbReference type="CTD" id="9692"/>
<dbReference type="MGI" id="MGI:1913382">
    <property type="gene designation" value="Prorp"/>
</dbReference>
<dbReference type="VEuPathDB" id="HostDB:ENSMUSG00000021023"/>
<dbReference type="eggNOG" id="ENOG502QRKG">
    <property type="taxonomic scope" value="Eukaryota"/>
</dbReference>
<dbReference type="GeneTree" id="ENSGT00390000002201"/>
<dbReference type="InParanoid" id="Q8JZY4"/>
<dbReference type="OMA" id="VKEPIRY"/>
<dbReference type="OrthoDB" id="46913at2759"/>
<dbReference type="PhylomeDB" id="Q8JZY4"/>
<dbReference type="TreeFam" id="TF324726"/>
<dbReference type="BioGRID-ORCS" id="66132">
    <property type="hits" value="20 hits in 79 CRISPR screens"/>
</dbReference>
<dbReference type="ChiTaRS" id="Prorp">
    <property type="organism name" value="mouse"/>
</dbReference>
<dbReference type="PRO" id="PR:Q8JZY4"/>
<dbReference type="Proteomes" id="UP000000589">
    <property type="component" value="Chromosome 12"/>
</dbReference>
<dbReference type="RNAct" id="Q8JZY4">
    <property type="molecule type" value="protein"/>
</dbReference>
<dbReference type="Bgee" id="ENSMUSG00000021023">
    <property type="expression patterns" value="Expressed in metanephric ureteric bud and 166 other cell types or tissues"/>
</dbReference>
<dbReference type="ExpressionAtlas" id="Q8JZY4">
    <property type="expression patterns" value="baseline and differential"/>
</dbReference>
<dbReference type="GO" id="GO:0042645">
    <property type="term" value="C:mitochondrial nucleoid"/>
    <property type="evidence" value="ECO:0000314"/>
    <property type="project" value="MGI"/>
</dbReference>
<dbReference type="GO" id="GO:0030678">
    <property type="term" value="C:mitochondrial ribonuclease P complex"/>
    <property type="evidence" value="ECO:0000250"/>
    <property type="project" value="UniProtKB"/>
</dbReference>
<dbReference type="GO" id="GO:0005739">
    <property type="term" value="C:mitochondrion"/>
    <property type="evidence" value="ECO:0000314"/>
    <property type="project" value="MGI"/>
</dbReference>
<dbReference type="GO" id="GO:0005654">
    <property type="term" value="C:nucleoplasm"/>
    <property type="evidence" value="ECO:0007669"/>
    <property type="project" value="Ensembl"/>
</dbReference>
<dbReference type="GO" id="GO:0046872">
    <property type="term" value="F:metal ion binding"/>
    <property type="evidence" value="ECO:0007669"/>
    <property type="project" value="UniProtKB-KW"/>
</dbReference>
<dbReference type="GO" id="GO:0004526">
    <property type="term" value="F:ribonuclease P activity"/>
    <property type="evidence" value="ECO:0000250"/>
    <property type="project" value="UniProtKB"/>
</dbReference>
<dbReference type="GO" id="GO:0097745">
    <property type="term" value="P:mitochondrial tRNA 5'-end processing"/>
    <property type="evidence" value="ECO:0000250"/>
    <property type="project" value="UniProtKB"/>
</dbReference>
<dbReference type="CDD" id="cd18718">
    <property type="entry name" value="PIN_PRORP"/>
    <property type="match status" value="1"/>
</dbReference>
<dbReference type="FunFam" id="1.25.40.10:FF:000276">
    <property type="entry name" value="Mitochondrial ribonuclease P catalytic subunit"/>
    <property type="match status" value="1"/>
</dbReference>
<dbReference type="FunFam" id="3.40.50.11980:FF:000003">
    <property type="entry name" value="Mitochondrial ribonuclease P catalytic subunit"/>
    <property type="match status" value="1"/>
</dbReference>
<dbReference type="Gene3D" id="3.40.50.11980">
    <property type="match status" value="1"/>
</dbReference>
<dbReference type="Gene3D" id="1.25.40.10">
    <property type="entry name" value="Tetratricopeptide repeat domain"/>
    <property type="match status" value="1"/>
</dbReference>
<dbReference type="InterPro" id="IPR033495">
    <property type="entry name" value="MRPP3_PIN_dom"/>
</dbReference>
<dbReference type="InterPro" id="IPR031595">
    <property type="entry name" value="PRORP_C"/>
</dbReference>
<dbReference type="InterPro" id="IPR011990">
    <property type="entry name" value="TPR-like_helical_dom_sf"/>
</dbReference>
<dbReference type="PANTHER" id="PTHR13547">
    <property type="match status" value="1"/>
</dbReference>
<dbReference type="PANTHER" id="PTHR13547:SF1">
    <property type="entry name" value="MITOCHONDRIAL RIBONUCLEASE P CATALYTIC SUBUNIT"/>
    <property type="match status" value="1"/>
</dbReference>
<dbReference type="Pfam" id="PF16953">
    <property type="entry name" value="PRORP"/>
    <property type="match status" value="1"/>
</dbReference>
<proteinExistence type="evidence at transcript level"/>